<organism>
    <name type="scientific">Centruroides noxius</name>
    <name type="common">Mexican scorpion</name>
    <dbReference type="NCBI Taxonomy" id="6878"/>
    <lineage>
        <taxon>Eukaryota</taxon>
        <taxon>Metazoa</taxon>
        <taxon>Ecdysozoa</taxon>
        <taxon>Arthropoda</taxon>
        <taxon>Chelicerata</taxon>
        <taxon>Arachnida</taxon>
        <taxon>Scorpiones</taxon>
        <taxon>Buthida</taxon>
        <taxon>Buthoidea</taxon>
        <taxon>Buthidae</taxon>
        <taxon>Centruroides</taxon>
    </lineage>
</organism>
<evidence type="ECO:0000250" key="1"/>
<evidence type="ECO:0000255" key="2">
    <source>
        <dbReference type="PROSITE-ProRule" id="PRU01210"/>
    </source>
</evidence>
<evidence type="ECO:0000269" key="3">
    <source>
    </source>
</evidence>
<evidence type="ECO:0000303" key="4">
    <source>
    </source>
</evidence>
<evidence type="ECO:0000305" key="5"/>
<evidence type="ECO:0000305" key="6">
    <source>
    </source>
</evidence>
<evidence type="ECO:0000312" key="7">
    <source>
        <dbReference type="EMBL" id="CAA69595.1"/>
    </source>
</evidence>
<proteinExistence type="evidence at protein level"/>
<dbReference type="EMBL" id="Y08270">
    <property type="protein sequence ID" value="CAA69595.1"/>
    <property type="molecule type" value="mRNA"/>
</dbReference>
<dbReference type="SMR" id="Q94435"/>
<dbReference type="GO" id="GO:0005576">
    <property type="term" value="C:extracellular region"/>
    <property type="evidence" value="ECO:0007669"/>
    <property type="project" value="UniProtKB-SubCell"/>
</dbReference>
<dbReference type="GO" id="GO:0019871">
    <property type="term" value="F:sodium channel inhibitor activity"/>
    <property type="evidence" value="ECO:0007669"/>
    <property type="project" value="InterPro"/>
</dbReference>
<dbReference type="GO" id="GO:0090729">
    <property type="term" value="F:toxin activity"/>
    <property type="evidence" value="ECO:0007669"/>
    <property type="project" value="UniProtKB-KW"/>
</dbReference>
<dbReference type="GO" id="GO:0006952">
    <property type="term" value="P:defense response"/>
    <property type="evidence" value="ECO:0007669"/>
    <property type="project" value="InterPro"/>
</dbReference>
<dbReference type="CDD" id="cd23106">
    <property type="entry name" value="neurotoxins_LC_scorpion"/>
    <property type="match status" value="1"/>
</dbReference>
<dbReference type="FunFam" id="3.30.30.10:FF:000002">
    <property type="entry name" value="Alpha-like toxin BmK-M1"/>
    <property type="match status" value="1"/>
</dbReference>
<dbReference type="Gene3D" id="3.30.30.10">
    <property type="entry name" value="Knottin, scorpion toxin-like"/>
    <property type="match status" value="1"/>
</dbReference>
<dbReference type="InterPro" id="IPR044062">
    <property type="entry name" value="LCN-type_CS_alpha_beta_dom"/>
</dbReference>
<dbReference type="InterPro" id="IPR003614">
    <property type="entry name" value="Scorpion_toxin-like"/>
</dbReference>
<dbReference type="InterPro" id="IPR036574">
    <property type="entry name" value="Scorpion_toxin-like_sf"/>
</dbReference>
<dbReference type="InterPro" id="IPR018218">
    <property type="entry name" value="Scorpion_toxinL"/>
</dbReference>
<dbReference type="InterPro" id="IPR002061">
    <property type="entry name" value="Scorpion_toxinL/defensin"/>
</dbReference>
<dbReference type="Pfam" id="PF00537">
    <property type="entry name" value="Toxin_3"/>
    <property type="match status" value="1"/>
</dbReference>
<dbReference type="PRINTS" id="PR00285">
    <property type="entry name" value="SCORPNTOXIN"/>
</dbReference>
<dbReference type="SMART" id="SM00505">
    <property type="entry name" value="Knot1"/>
    <property type="match status" value="1"/>
</dbReference>
<dbReference type="SUPFAM" id="SSF57095">
    <property type="entry name" value="Scorpion toxin-like"/>
    <property type="match status" value="1"/>
</dbReference>
<dbReference type="PROSITE" id="PS51863">
    <property type="entry name" value="LCN_CSAB"/>
    <property type="match status" value="1"/>
</dbReference>
<accession>Q94435</accession>
<accession>P91591</accession>
<reference key="1">
    <citation type="journal article" date="1996" name="Eur. J. Biochem.">
        <title>An insect-specific toxin from Centruroides noxius Hoffmann. cDNA, primary structure three-dimensional model and electrostatic surface potentials in comparison with other toxin variants.</title>
        <authorList>
            <person name="Selisko B."/>
            <person name="Garcia C."/>
            <person name="Becerril B."/>
            <person name="Delepierre M."/>
            <person name="Possani L.D."/>
        </authorList>
    </citation>
    <scope>NUCLEOTIDE SEQUENCE [MRNA]</scope>
    <scope>PROTEIN SEQUENCE OF 14-80</scope>
    <scope>SUBCELLULAR LOCATION</scope>
    <source>
        <tissue>Venom</tissue>
        <tissue>Venom gland</tissue>
    </source>
</reference>
<feature type="signal peptide" evidence="3">
    <location>
        <begin position="1" status="less than"/>
        <end position="13"/>
    </location>
</feature>
<feature type="chain" id="PRO_0000035286" description="Insect-toxin Cn10">
    <location>
        <begin position="14"/>
        <end position="80"/>
    </location>
</feature>
<feature type="propeptide" id="PRO_0000035287" description="Removed by a carboxypeptidase">
    <location>
        <position position="81"/>
    </location>
</feature>
<feature type="domain" description="LCN-type CS-alpha/beta" evidence="2">
    <location>
        <begin position="14"/>
        <end position="79"/>
    </location>
</feature>
<feature type="disulfide bond" evidence="2">
    <location>
        <begin position="25"/>
        <end position="78"/>
    </location>
</feature>
<feature type="disulfide bond" evidence="2">
    <location>
        <begin position="29"/>
        <end position="54"/>
    </location>
</feature>
<feature type="disulfide bond" evidence="2">
    <location>
        <begin position="38"/>
        <end position="59"/>
    </location>
</feature>
<feature type="disulfide bond" evidence="2">
    <location>
        <begin position="42"/>
        <end position="61"/>
    </location>
</feature>
<feature type="non-terminal residue">
    <location>
        <position position="1"/>
    </location>
</feature>
<name>SCXA_CENNO</name>
<protein>
    <recommendedName>
        <fullName evidence="4">Insect-toxin Cn10</fullName>
    </recommendedName>
    <alternativeName>
        <fullName evidence="7">CngtVIII</fullName>
    </alternativeName>
</protein>
<comment type="function">
    <text evidence="1">Beta toxins bind voltage-independently at site-4 of sodium channels (Nav) and shift the voltage of activation toward more negative potentials thereby affecting sodium channel activation and promoting spontaneous and repetitive firing (By similarity). Is toxic on insects and crustaceans, but not on mammals.</text>
</comment>
<comment type="subcellular location">
    <subcellularLocation>
        <location evidence="3">Secreted</location>
    </subcellularLocation>
</comment>
<comment type="tissue specificity">
    <text evidence="6">Expressed by the venom gland.</text>
</comment>
<comment type="domain">
    <text evidence="5">Has the structural arrangement of an alpha-helix connected to antiparallel beta-sheets by disulfide bonds (CS-alpha/beta).</text>
</comment>
<comment type="similarity">
    <text evidence="5">Belongs to the long (4 C-C) scorpion toxin superfamily. Sodium channel inhibitor family. Beta subfamily.</text>
</comment>
<keyword id="KW-0903">Direct protein sequencing</keyword>
<keyword id="KW-1015">Disulfide bond</keyword>
<keyword id="KW-0872">Ion channel impairing toxin</keyword>
<keyword id="KW-0528">Neurotoxin</keyword>
<keyword id="KW-0964">Secreted</keyword>
<keyword id="KW-0732">Signal</keyword>
<keyword id="KW-0800">Toxin</keyword>
<keyword id="KW-0738">Voltage-gated sodium channel impairing toxin</keyword>
<sequence length="81" mass="8812">ITACLVLIGTVCAKEGYLVNKSTGCKYNCLILGENKNCDMECKAKNQGGSYGYCYKLACWCEGLPESTPTYPIPGKTCRTK</sequence>